<proteinExistence type="inferred from homology"/>
<comment type="function">
    <text evidence="1">Catalyzes the irreversible transfer of a propylamine group from the amino donor S-adenosylmethioninamine (decarboxy-AdoMet) to putrescine (1,4-diaminobutane) to yield spermidine.</text>
</comment>
<comment type="catalytic activity">
    <reaction evidence="1">
        <text>S-adenosyl 3-(methylsulfanyl)propylamine + putrescine = S-methyl-5'-thioadenosine + spermidine + H(+)</text>
        <dbReference type="Rhea" id="RHEA:12721"/>
        <dbReference type="ChEBI" id="CHEBI:15378"/>
        <dbReference type="ChEBI" id="CHEBI:17509"/>
        <dbReference type="ChEBI" id="CHEBI:57443"/>
        <dbReference type="ChEBI" id="CHEBI:57834"/>
        <dbReference type="ChEBI" id="CHEBI:326268"/>
        <dbReference type="EC" id="2.5.1.16"/>
    </reaction>
</comment>
<comment type="pathway">
    <text evidence="1">Amine and polyamine biosynthesis; spermidine biosynthesis; spermidine from putrescine: step 1/1.</text>
</comment>
<comment type="subunit">
    <text evidence="1">Homodimer or homotetramer.</text>
</comment>
<comment type="subcellular location">
    <subcellularLocation>
        <location evidence="1">Cytoplasm</location>
    </subcellularLocation>
</comment>
<comment type="similarity">
    <text evidence="1">Belongs to the spermidine/spermine synthase family.</text>
</comment>
<dbReference type="EC" id="2.5.1.16" evidence="1"/>
<dbReference type="EMBL" id="CP001657">
    <property type="protein sequence ID" value="ACT14152.1"/>
    <property type="molecule type" value="Genomic_DNA"/>
</dbReference>
<dbReference type="RefSeq" id="WP_015841294.1">
    <property type="nucleotide sequence ID" value="NC_012917.1"/>
</dbReference>
<dbReference type="SMR" id="C6DC58"/>
<dbReference type="STRING" id="561230.PC1_3129"/>
<dbReference type="KEGG" id="pct:PC1_3129"/>
<dbReference type="eggNOG" id="COG0421">
    <property type="taxonomic scope" value="Bacteria"/>
</dbReference>
<dbReference type="HOGENOM" id="CLU_048199_1_0_6"/>
<dbReference type="OrthoDB" id="9793120at2"/>
<dbReference type="UniPathway" id="UPA00248">
    <property type="reaction ID" value="UER00314"/>
</dbReference>
<dbReference type="Proteomes" id="UP000002736">
    <property type="component" value="Chromosome"/>
</dbReference>
<dbReference type="GO" id="GO:0005829">
    <property type="term" value="C:cytosol"/>
    <property type="evidence" value="ECO:0007669"/>
    <property type="project" value="TreeGrafter"/>
</dbReference>
<dbReference type="GO" id="GO:0004766">
    <property type="term" value="F:spermidine synthase activity"/>
    <property type="evidence" value="ECO:0007669"/>
    <property type="project" value="UniProtKB-UniRule"/>
</dbReference>
<dbReference type="GO" id="GO:0008295">
    <property type="term" value="P:spermidine biosynthetic process"/>
    <property type="evidence" value="ECO:0007669"/>
    <property type="project" value="UniProtKB-UniRule"/>
</dbReference>
<dbReference type="CDD" id="cd02440">
    <property type="entry name" value="AdoMet_MTases"/>
    <property type="match status" value="1"/>
</dbReference>
<dbReference type="FunFam" id="2.30.140.10:FF:000002">
    <property type="entry name" value="Polyamine aminopropyltransferase"/>
    <property type="match status" value="1"/>
</dbReference>
<dbReference type="FunFam" id="3.40.50.150:FF:000026">
    <property type="entry name" value="Polyamine aminopropyltransferase"/>
    <property type="match status" value="1"/>
</dbReference>
<dbReference type="Gene3D" id="2.30.140.10">
    <property type="entry name" value="Spermidine synthase, tetramerisation domain"/>
    <property type="match status" value="1"/>
</dbReference>
<dbReference type="Gene3D" id="3.40.50.150">
    <property type="entry name" value="Vaccinia Virus protein VP39"/>
    <property type="match status" value="1"/>
</dbReference>
<dbReference type="HAMAP" id="MF_00198">
    <property type="entry name" value="Spermidine_synth"/>
    <property type="match status" value="1"/>
</dbReference>
<dbReference type="InterPro" id="IPR030374">
    <property type="entry name" value="PABS"/>
</dbReference>
<dbReference type="InterPro" id="IPR030373">
    <property type="entry name" value="PABS_CS"/>
</dbReference>
<dbReference type="InterPro" id="IPR029063">
    <property type="entry name" value="SAM-dependent_MTases_sf"/>
</dbReference>
<dbReference type="InterPro" id="IPR001045">
    <property type="entry name" value="Spermi_synthase"/>
</dbReference>
<dbReference type="InterPro" id="IPR035246">
    <property type="entry name" value="Spermidine_synt_N"/>
</dbReference>
<dbReference type="InterPro" id="IPR037163">
    <property type="entry name" value="Spermidine_synt_N_sf"/>
</dbReference>
<dbReference type="NCBIfam" id="NF037959">
    <property type="entry name" value="MFS_SpdSyn"/>
    <property type="match status" value="1"/>
</dbReference>
<dbReference type="NCBIfam" id="NF002010">
    <property type="entry name" value="PRK00811.1"/>
    <property type="match status" value="1"/>
</dbReference>
<dbReference type="NCBIfam" id="TIGR00417">
    <property type="entry name" value="speE"/>
    <property type="match status" value="1"/>
</dbReference>
<dbReference type="PANTHER" id="PTHR11558:SF11">
    <property type="entry name" value="SPERMIDINE SYNTHASE"/>
    <property type="match status" value="1"/>
</dbReference>
<dbReference type="PANTHER" id="PTHR11558">
    <property type="entry name" value="SPERMIDINE/SPERMINE SYNTHASE"/>
    <property type="match status" value="1"/>
</dbReference>
<dbReference type="Pfam" id="PF17284">
    <property type="entry name" value="Spermine_synt_N"/>
    <property type="match status" value="1"/>
</dbReference>
<dbReference type="Pfam" id="PF01564">
    <property type="entry name" value="Spermine_synth"/>
    <property type="match status" value="1"/>
</dbReference>
<dbReference type="SUPFAM" id="SSF53335">
    <property type="entry name" value="S-adenosyl-L-methionine-dependent methyltransferases"/>
    <property type="match status" value="1"/>
</dbReference>
<dbReference type="PROSITE" id="PS01330">
    <property type="entry name" value="PABS_1"/>
    <property type="match status" value="1"/>
</dbReference>
<dbReference type="PROSITE" id="PS51006">
    <property type="entry name" value="PABS_2"/>
    <property type="match status" value="1"/>
</dbReference>
<accession>C6DC58</accession>
<keyword id="KW-0963">Cytoplasm</keyword>
<keyword id="KW-0620">Polyamine biosynthesis</keyword>
<keyword id="KW-0745">Spermidine biosynthesis</keyword>
<keyword id="KW-0808">Transferase</keyword>
<protein>
    <recommendedName>
        <fullName evidence="1">Polyamine aminopropyltransferase</fullName>
    </recommendedName>
    <alternativeName>
        <fullName evidence="1">Putrescine aminopropyltransferase</fullName>
        <shortName evidence="1">PAPT</shortName>
    </alternativeName>
    <alternativeName>
        <fullName evidence="1">Spermidine synthase</fullName>
        <shortName evidence="1">SPDS</shortName>
        <shortName evidence="1">SPDSY</shortName>
        <ecNumber evidence="1">2.5.1.16</ecNumber>
    </alternativeName>
</protein>
<feature type="chain" id="PRO_1000204076" description="Polyamine aminopropyltransferase">
    <location>
        <begin position="1"/>
        <end position="287"/>
    </location>
</feature>
<feature type="domain" description="PABS" evidence="1">
    <location>
        <begin position="5"/>
        <end position="238"/>
    </location>
</feature>
<feature type="active site" description="Proton acceptor" evidence="1">
    <location>
        <position position="158"/>
    </location>
</feature>
<feature type="binding site" evidence="1">
    <location>
        <position position="33"/>
    </location>
    <ligand>
        <name>S-methyl-5'-thioadenosine</name>
        <dbReference type="ChEBI" id="CHEBI:17509"/>
    </ligand>
</feature>
<feature type="binding site" evidence="1">
    <location>
        <position position="64"/>
    </location>
    <ligand>
        <name>spermidine</name>
        <dbReference type="ChEBI" id="CHEBI:57834"/>
    </ligand>
</feature>
<feature type="binding site" evidence="1">
    <location>
        <position position="88"/>
    </location>
    <ligand>
        <name>spermidine</name>
        <dbReference type="ChEBI" id="CHEBI:57834"/>
    </ligand>
</feature>
<feature type="binding site" evidence="1">
    <location>
        <position position="108"/>
    </location>
    <ligand>
        <name>S-methyl-5'-thioadenosine</name>
        <dbReference type="ChEBI" id="CHEBI:17509"/>
    </ligand>
</feature>
<feature type="binding site" evidence="1">
    <location>
        <begin position="140"/>
        <end position="141"/>
    </location>
    <ligand>
        <name>S-methyl-5'-thioadenosine</name>
        <dbReference type="ChEBI" id="CHEBI:17509"/>
    </ligand>
</feature>
<feature type="binding site" evidence="1">
    <location>
        <begin position="158"/>
        <end position="161"/>
    </location>
    <ligand>
        <name>spermidine</name>
        <dbReference type="ChEBI" id="CHEBI:57834"/>
    </ligand>
</feature>
<feature type="binding site" evidence="1">
    <location>
        <position position="165"/>
    </location>
    <ligand>
        <name>S-methyl-5'-thioadenosine</name>
        <dbReference type="ChEBI" id="CHEBI:17509"/>
    </ligand>
</feature>
<reference key="1">
    <citation type="submission" date="2009-07" db="EMBL/GenBank/DDBJ databases">
        <title>Complete sequence of Pectobacterium carotovorum subsp. carotovorum PC1.</title>
        <authorList>
            <consortium name="US DOE Joint Genome Institute"/>
            <person name="Lucas S."/>
            <person name="Copeland A."/>
            <person name="Lapidus A."/>
            <person name="Glavina del Rio T."/>
            <person name="Tice H."/>
            <person name="Bruce D."/>
            <person name="Goodwin L."/>
            <person name="Pitluck S."/>
            <person name="Munk A.C."/>
            <person name="Brettin T."/>
            <person name="Detter J.C."/>
            <person name="Han C."/>
            <person name="Tapia R."/>
            <person name="Larimer F."/>
            <person name="Land M."/>
            <person name="Hauser L."/>
            <person name="Kyrpides N."/>
            <person name="Mikhailova N."/>
            <person name="Balakrishnan V."/>
            <person name="Glasner J."/>
            <person name="Perna N.T."/>
        </authorList>
    </citation>
    <scope>NUCLEOTIDE SEQUENCE [LARGE SCALE GENOMIC DNA]</scope>
    <source>
        <strain>PC1</strain>
    </source>
</reference>
<name>SPEE_PECCP</name>
<organism>
    <name type="scientific">Pectobacterium carotovorum subsp. carotovorum (strain PC1)</name>
    <dbReference type="NCBI Taxonomy" id="561230"/>
    <lineage>
        <taxon>Bacteria</taxon>
        <taxon>Pseudomonadati</taxon>
        <taxon>Pseudomonadota</taxon>
        <taxon>Gammaproteobacteria</taxon>
        <taxon>Enterobacterales</taxon>
        <taxon>Pectobacteriaceae</taxon>
        <taxon>Pectobacterium</taxon>
    </lineage>
</organism>
<evidence type="ECO:0000255" key="1">
    <source>
        <dbReference type="HAMAP-Rule" id="MF_00198"/>
    </source>
</evidence>
<gene>
    <name evidence="1" type="primary">speE</name>
    <name type="ordered locus">PC1_3129</name>
</gene>
<sequence length="287" mass="32278">MSQKEIWYETLHANFGQYFSVDRVLYHEKTDHQDLIIFENDALGRVMALDGVVQTTERDEFIYHEMLTHVPLLSHGNAKRVLIIGGGDGGMLREVSRHHGVEHITMVEIDAGVVEFCRQYLPNHSAGSYDDPRFNLVIDDGVNFVRQCSDKFDVIISDCTDPIGPGESLFTSDFYQGCARCLNEGGIFVAQNGVCFLQQDEAVGSHKKLGHYFKDVSFYQAAIPTYYGGIMTFAWASNNPALRQIDATTLRQRFAQSGITCRYYTPDVHIGSFALPQYLLSALQNAQ</sequence>